<dbReference type="EMBL" id="EU549769">
    <property type="protein sequence ID" value="ACB86559.1"/>
    <property type="molecule type" value="Genomic_DNA"/>
</dbReference>
<dbReference type="RefSeq" id="YP_001837393.1">
    <property type="nucleotide sequence ID" value="NC_010601.1"/>
</dbReference>
<dbReference type="SMR" id="B2LMM6"/>
<dbReference type="GeneID" id="6219162"/>
<dbReference type="GO" id="GO:0009507">
    <property type="term" value="C:chloroplast"/>
    <property type="evidence" value="ECO:0007669"/>
    <property type="project" value="UniProtKB-SubCell"/>
</dbReference>
<dbReference type="GO" id="GO:1990904">
    <property type="term" value="C:ribonucleoprotein complex"/>
    <property type="evidence" value="ECO:0007669"/>
    <property type="project" value="UniProtKB-KW"/>
</dbReference>
<dbReference type="GO" id="GO:0005840">
    <property type="term" value="C:ribosome"/>
    <property type="evidence" value="ECO:0007669"/>
    <property type="project" value="UniProtKB-KW"/>
</dbReference>
<dbReference type="GO" id="GO:0019843">
    <property type="term" value="F:rRNA binding"/>
    <property type="evidence" value="ECO:0007669"/>
    <property type="project" value="UniProtKB-UniRule"/>
</dbReference>
<dbReference type="GO" id="GO:0003735">
    <property type="term" value="F:structural constituent of ribosome"/>
    <property type="evidence" value="ECO:0007669"/>
    <property type="project" value="InterPro"/>
</dbReference>
<dbReference type="GO" id="GO:0006412">
    <property type="term" value="P:translation"/>
    <property type="evidence" value="ECO:0007669"/>
    <property type="project" value="UniProtKB-UniRule"/>
</dbReference>
<dbReference type="FunFam" id="3.30.420.80:FF:000003">
    <property type="entry name" value="30S ribosomal protein S11, chloroplastic"/>
    <property type="match status" value="1"/>
</dbReference>
<dbReference type="Gene3D" id="3.30.420.80">
    <property type="entry name" value="Ribosomal protein S11"/>
    <property type="match status" value="1"/>
</dbReference>
<dbReference type="HAMAP" id="MF_01310">
    <property type="entry name" value="Ribosomal_uS11"/>
    <property type="match status" value="1"/>
</dbReference>
<dbReference type="InterPro" id="IPR001971">
    <property type="entry name" value="Ribosomal_uS11"/>
</dbReference>
<dbReference type="InterPro" id="IPR019981">
    <property type="entry name" value="Ribosomal_uS11_bac-type"/>
</dbReference>
<dbReference type="InterPro" id="IPR018102">
    <property type="entry name" value="Ribosomal_uS11_CS"/>
</dbReference>
<dbReference type="InterPro" id="IPR036967">
    <property type="entry name" value="Ribosomal_uS11_sf"/>
</dbReference>
<dbReference type="NCBIfam" id="NF003698">
    <property type="entry name" value="PRK05309.1"/>
    <property type="match status" value="1"/>
</dbReference>
<dbReference type="NCBIfam" id="TIGR03632">
    <property type="entry name" value="uS11_bact"/>
    <property type="match status" value="1"/>
</dbReference>
<dbReference type="PANTHER" id="PTHR11759">
    <property type="entry name" value="40S RIBOSOMAL PROTEIN S14/30S RIBOSOMAL PROTEIN S11"/>
    <property type="match status" value="1"/>
</dbReference>
<dbReference type="Pfam" id="PF00411">
    <property type="entry name" value="Ribosomal_S11"/>
    <property type="match status" value="1"/>
</dbReference>
<dbReference type="PIRSF" id="PIRSF002131">
    <property type="entry name" value="Ribosomal_S11"/>
    <property type="match status" value="1"/>
</dbReference>
<dbReference type="SUPFAM" id="SSF53137">
    <property type="entry name" value="Translational machinery components"/>
    <property type="match status" value="1"/>
</dbReference>
<dbReference type="PROSITE" id="PS00054">
    <property type="entry name" value="RIBOSOMAL_S11"/>
    <property type="match status" value="1"/>
</dbReference>
<accession>B2LMM6</accession>
<geneLocation type="chloroplast"/>
<feature type="chain" id="PRO_0000364214" description="Small ribosomal subunit protein uS11c">
    <location>
        <begin position="1"/>
        <end position="136"/>
    </location>
</feature>
<keyword id="KW-0150">Chloroplast</keyword>
<keyword id="KW-0934">Plastid</keyword>
<keyword id="KW-0687">Ribonucleoprotein</keyword>
<keyword id="KW-0689">Ribosomal protein</keyword>
<keyword id="KW-0694">RNA-binding</keyword>
<keyword id="KW-0699">rRNA-binding</keyword>
<reference key="1">
    <citation type="submission" date="2008-03" db="EMBL/GenBank/DDBJ databases">
        <title>Guizotia abyssinica chloroplast sequenced using Solexa.</title>
        <authorList>
            <person name="Kane N.C."/>
            <person name="Dempewolf H."/>
            <person name="Stewart M.L."/>
            <person name="Cronk Q."/>
            <person name="Rieseberrg L.H."/>
        </authorList>
    </citation>
    <scope>NUCLEOTIDE SEQUENCE [LARGE SCALE GENOMIC DNA]</scope>
    <source>
        <strain>cv. PI 508077</strain>
    </source>
</reference>
<gene>
    <name evidence="1" type="primary">rps11</name>
    <name type="ordered locus">GuabCp055</name>
</gene>
<name>RR11_GUIAB</name>
<evidence type="ECO:0000255" key="1">
    <source>
        <dbReference type="HAMAP-Rule" id="MF_01310"/>
    </source>
</evidence>
<evidence type="ECO:0000305" key="2"/>
<comment type="subunit">
    <text evidence="1">Part of the 30S ribosomal subunit.</text>
</comment>
<comment type="subcellular location">
    <subcellularLocation>
        <location>Plastid</location>
        <location>Chloroplast</location>
    </subcellularLocation>
</comment>
<comment type="similarity">
    <text evidence="1">Belongs to the universal ribosomal protein uS11 family.</text>
</comment>
<proteinExistence type="inferred from homology"/>
<sequence length="136" mass="14670">MAKAIPKKGSRGRIGSRKSIRKIPKGVIHIQASFNNTIVTVTDVRGRVVSWSSAGTCGFRGTRRGTPFAAQTAAANAIRAVVDQGMQRAEVMIKGPGLGRDAALRAIRRSGILLTFVRDVTPMPHNGCRPPKKRRV</sequence>
<organism>
    <name type="scientific">Guizotia abyssinica</name>
    <name type="common">Niger</name>
    <name type="synonym">Ramtilla</name>
    <dbReference type="NCBI Taxonomy" id="4230"/>
    <lineage>
        <taxon>Eukaryota</taxon>
        <taxon>Viridiplantae</taxon>
        <taxon>Streptophyta</taxon>
        <taxon>Embryophyta</taxon>
        <taxon>Tracheophyta</taxon>
        <taxon>Spermatophyta</taxon>
        <taxon>Magnoliopsida</taxon>
        <taxon>eudicotyledons</taxon>
        <taxon>Gunneridae</taxon>
        <taxon>Pentapetalae</taxon>
        <taxon>asterids</taxon>
        <taxon>campanulids</taxon>
        <taxon>Asterales</taxon>
        <taxon>Asteraceae</taxon>
        <taxon>Asteroideae</taxon>
        <taxon>Heliantheae alliance</taxon>
        <taxon>Millerieae</taxon>
        <taxon>Guizotia</taxon>
    </lineage>
</organism>
<protein>
    <recommendedName>
        <fullName evidence="1">Small ribosomal subunit protein uS11c</fullName>
    </recommendedName>
    <alternativeName>
        <fullName evidence="2">30S ribosomal protein S11, chloroplastic</fullName>
    </alternativeName>
</protein>